<keyword id="KW-0378">Hydrolase</keyword>
<keyword id="KW-1185">Reference proteome</keyword>
<dbReference type="EC" id="3.6.1.7"/>
<dbReference type="EMBL" id="AM167904">
    <property type="protein sequence ID" value="CAJ51012.1"/>
    <property type="molecule type" value="Genomic_DNA"/>
</dbReference>
<dbReference type="RefSeq" id="WP_012419038.1">
    <property type="nucleotide sequence ID" value="NC_010645.1"/>
</dbReference>
<dbReference type="SMR" id="Q2KTJ9"/>
<dbReference type="STRING" id="360910.BAV3402"/>
<dbReference type="GeneID" id="92933337"/>
<dbReference type="KEGG" id="bav:BAV3402"/>
<dbReference type="eggNOG" id="COG1254">
    <property type="taxonomic scope" value="Bacteria"/>
</dbReference>
<dbReference type="HOGENOM" id="CLU_141932_1_2_4"/>
<dbReference type="OrthoDB" id="5295388at2"/>
<dbReference type="Proteomes" id="UP000001977">
    <property type="component" value="Chromosome"/>
</dbReference>
<dbReference type="GO" id="GO:0003998">
    <property type="term" value="F:acylphosphatase activity"/>
    <property type="evidence" value="ECO:0007669"/>
    <property type="project" value="UniProtKB-EC"/>
</dbReference>
<dbReference type="Gene3D" id="3.30.70.100">
    <property type="match status" value="1"/>
</dbReference>
<dbReference type="InterPro" id="IPR020456">
    <property type="entry name" value="Acylphosphatase"/>
</dbReference>
<dbReference type="InterPro" id="IPR001792">
    <property type="entry name" value="Acylphosphatase-like_dom"/>
</dbReference>
<dbReference type="InterPro" id="IPR036046">
    <property type="entry name" value="Acylphosphatase-like_dom_sf"/>
</dbReference>
<dbReference type="InterPro" id="IPR017968">
    <property type="entry name" value="Acylphosphatase_CS"/>
</dbReference>
<dbReference type="NCBIfam" id="NF010998">
    <property type="entry name" value="PRK14424.1"/>
    <property type="match status" value="1"/>
</dbReference>
<dbReference type="PANTHER" id="PTHR47268">
    <property type="entry name" value="ACYLPHOSPHATASE"/>
    <property type="match status" value="1"/>
</dbReference>
<dbReference type="PANTHER" id="PTHR47268:SF4">
    <property type="entry name" value="ACYLPHOSPHATASE"/>
    <property type="match status" value="1"/>
</dbReference>
<dbReference type="Pfam" id="PF00708">
    <property type="entry name" value="Acylphosphatase"/>
    <property type="match status" value="1"/>
</dbReference>
<dbReference type="PRINTS" id="PR00112">
    <property type="entry name" value="ACYLPHPHTASE"/>
</dbReference>
<dbReference type="SUPFAM" id="SSF54975">
    <property type="entry name" value="Acylphosphatase/BLUF domain-like"/>
    <property type="match status" value="1"/>
</dbReference>
<dbReference type="PROSITE" id="PS00151">
    <property type="entry name" value="ACYLPHOSPHATASE_2"/>
    <property type="match status" value="1"/>
</dbReference>
<dbReference type="PROSITE" id="PS51160">
    <property type="entry name" value="ACYLPHOSPHATASE_3"/>
    <property type="match status" value="1"/>
</dbReference>
<reference key="1">
    <citation type="journal article" date="2006" name="J. Bacteriol.">
        <title>Comparison of the genome sequence of the poultry pathogen Bordetella avium with those of B. bronchiseptica, B. pertussis, and B. parapertussis reveals extensive diversity in surface structures associated with host interaction.</title>
        <authorList>
            <person name="Sebaihia M."/>
            <person name="Preston A."/>
            <person name="Maskell D.J."/>
            <person name="Kuzmiak H."/>
            <person name="Connell T.D."/>
            <person name="King N.D."/>
            <person name="Orndorff P.E."/>
            <person name="Miyamoto D.M."/>
            <person name="Thomson N.R."/>
            <person name="Harris D."/>
            <person name="Goble A."/>
            <person name="Lord A."/>
            <person name="Murphy L."/>
            <person name="Quail M.A."/>
            <person name="Rutter S."/>
            <person name="Squares R."/>
            <person name="Squares S."/>
            <person name="Woodward J."/>
            <person name="Parkhill J."/>
            <person name="Temple L.M."/>
        </authorList>
    </citation>
    <scope>NUCLEOTIDE SEQUENCE [LARGE SCALE GENOMIC DNA]</scope>
    <source>
        <strain>197N</strain>
    </source>
</reference>
<proteinExistence type="inferred from homology"/>
<feature type="chain" id="PRO_0000326660" description="Acylphosphatase">
    <location>
        <begin position="1"/>
        <end position="94"/>
    </location>
</feature>
<feature type="domain" description="Acylphosphatase-like" evidence="1">
    <location>
        <begin position="8"/>
        <end position="94"/>
    </location>
</feature>
<feature type="region of interest" description="Disordered" evidence="2">
    <location>
        <begin position="69"/>
        <end position="94"/>
    </location>
</feature>
<feature type="compositionally biased region" description="Basic and acidic residues" evidence="2">
    <location>
        <begin position="77"/>
        <end position="86"/>
    </location>
</feature>
<feature type="active site" evidence="1">
    <location>
        <position position="23"/>
    </location>
</feature>
<feature type="active site" evidence="1">
    <location>
        <position position="41"/>
    </location>
</feature>
<comment type="catalytic activity">
    <reaction>
        <text>an acyl phosphate + H2O = a carboxylate + phosphate + H(+)</text>
        <dbReference type="Rhea" id="RHEA:14965"/>
        <dbReference type="ChEBI" id="CHEBI:15377"/>
        <dbReference type="ChEBI" id="CHEBI:15378"/>
        <dbReference type="ChEBI" id="CHEBI:29067"/>
        <dbReference type="ChEBI" id="CHEBI:43474"/>
        <dbReference type="ChEBI" id="CHEBI:59918"/>
        <dbReference type="EC" id="3.6.1.7"/>
    </reaction>
</comment>
<comment type="similarity">
    <text evidence="3">Belongs to the acylphosphatase family.</text>
</comment>
<sequence length="94" mass="10677">MQDPNIETLFIIVHGKVQGVGYRHATVRRAHMLGVTGWVQNMENGTVQAMVQGSPDQVDHMLEWMRRGPPAASVTELESRREDGGRRFKHFAQH</sequence>
<evidence type="ECO:0000255" key="1">
    <source>
        <dbReference type="PROSITE-ProRule" id="PRU00520"/>
    </source>
</evidence>
<evidence type="ECO:0000256" key="2">
    <source>
        <dbReference type="SAM" id="MobiDB-lite"/>
    </source>
</evidence>
<evidence type="ECO:0000305" key="3"/>
<protein>
    <recommendedName>
        <fullName>Acylphosphatase</fullName>
        <ecNumber>3.6.1.7</ecNumber>
    </recommendedName>
    <alternativeName>
        <fullName>Acylphosphate phosphohydrolase</fullName>
    </alternativeName>
</protein>
<gene>
    <name type="primary">acyP</name>
    <name type="ordered locus">BAV3402</name>
</gene>
<name>ACYP_BORA1</name>
<accession>Q2KTJ9</accession>
<organism>
    <name type="scientific">Bordetella avium (strain 197N)</name>
    <dbReference type="NCBI Taxonomy" id="360910"/>
    <lineage>
        <taxon>Bacteria</taxon>
        <taxon>Pseudomonadati</taxon>
        <taxon>Pseudomonadota</taxon>
        <taxon>Betaproteobacteria</taxon>
        <taxon>Burkholderiales</taxon>
        <taxon>Alcaligenaceae</taxon>
        <taxon>Bordetella</taxon>
    </lineage>
</organism>